<keyword id="KW-0106">Calcium</keyword>
<keyword id="KW-0131">Cell cycle</keyword>
<keyword id="KW-0132">Cell division</keyword>
<keyword id="KW-0159">Chromosome partition</keyword>
<keyword id="KW-0963">Cytoplasm</keyword>
<keyword id="KW-0226">DNA condensation</keyword>
<keyword id="KW-1185">Reference proteome</keyword>
<name>MUKF_SALAR</name>
<evidence type="ECO:0000255" key="1">
    <source>
        <dbReference type="HAMAP-Rule" id="MF_01803"/>
    </source>
</evidence>
<gene>
    <name evidence="1" type="primary">mukF</name>
    <name type="ordered locus">SARI_01970</name>
</gene>
<accession>A9MHW1</accession>
<sequence length="440" mass="50457">MSEISQTVPELVAWARKNDFSISLPVDRLSFLLAVATLNGERLDGEMSEGELVDAFRHVSDAFEQTSETIGVRANNAINEMVRQRLLNRFTSEQAEGNAIYRLTPLGIGITDYYIRQREFSTLRLSMQLSIVAGELKRAADAAQEGGDEFHWHRNVYAPLKYSVAEIFDSIDLTQRIMDEQQQQVKDDIAQLLNKDWRAAISSCELLLSETSGTLRELQDTLEAAGDKLQANLLRIQDATMSHDDLHFVDRLVFDLQSKLDRIISWGQQSIDLWIGYDRHVHKFIRTAIDMDKNRVFAQRLRQSVQTYFDDPWALTYASADRLLDMRDEEMALRDDEVTGELPPDLEYEEFNEIREQLAAIIEEQLAIYKTRQTPLDLGLVVREYLAQYPRARHFDVARIVIDQAVRLGVAQADFTGLPAKWQPINDYGAKVQAHVIDKY</sequence>
<organism>
    <name type="scientific">Salmonella arizonae (strain ATCC BAA-731 / CDC346-86 / RSK2980)</name>
    <dbReference type="NCBI Taxonomy" id="41514"/>
    <lineage>
        <taxon>Bacteria</taxon>
        <taxon>Pseudomonadati</taxon>
        <taxon>Pseudomonadota</taxon>
        <taxon>Gammaproteobacteria</taxon>
        <taxon>Enterobacterales</taxon>
        <taxon>Enterobacteriaceae</taxon>
        <taxon>Salmonella</taxon>
    </lineage>
</organism>
<dbReference type="EMBL" id="CP000880">
    <property type="protein sequence ID" value="ABX21851.1"/>
    <property type="molecule type" value="Genomic_DNA"/>
</dbReference>
<dbReference type="SMR" id="A9MHW1"/>
<dbReference type="STRING" id="41514.SARI_01970"/>
<dbReference type="KEGG" id="ses:SARI_01970"/>
<dbReference type="HOGENOM" id="CLU_049853_0_0_6"/>
<dbReference type="Proteomes" id="UP000002084">
    <property type="component" value="Chromosome"/>
</dbReference>
<dbReference type="GO" id="GO:0005737">
    <property type="term" value="C:cytoplasm"/>
    <property type="evidence" value="ECO:0007669"/>
    <property type="project" value="UniProtKB-UniRule"/>
</dbReference>
<dbReference type="GO" id="GO:0009295">
    <property type="term" value="C:nucleoid"/>
    <property type="evidence" value="ECO:0007669"/>
    <property type="project" value="UniProtKB-SubCell"/>
</dbReference>
<dbReference type="GO" id="GO:0005509">
    <property type="term" value="F:calcium ion binding"/>
    <property type="evidence" value="ECO:0007669"/>
    <property type="project" value="UniProtKB-UniRule"/>
</dbReference>
<dbReference type="GO" id="GO:0051301">
    <property type="term" value="P:cell division"/>
    <property type="evidence" value="ECO:0007669"/>
    <property type="project" value="UniProtKB-KW"/>
</dbReference>
<dbReference type="GO" id="GO:0030261">
    <property type="term" value="P:chromosome condensation"/>
    <property type="evidence" value="ECO:0007669"/>
    <property type="project" value="UniProtKB-KW"/>
</dbReference>
<dbReference type="GO" id="GO:0007059">
    <property type="term" value="P:chromosome segregation"/>
    <property type="evidence" value="ECO:0007669"/>
    <property type="project" value="UniProtKB-UniRule"/>
</dbReference>
<dbReference type="GO" id="GO:0006260">
    <property type="term" value="P:DNA replication"/>
    <property type="evidence" value="ECO:0007669"/>
    <property type="project" value="UniProtKB-UniRule"/>
</dbReference>
<dbReference type="CDD" id="cd16337">
    <property type="entry name" value="MukF_C"/>
    <property type="match status" value="1"/>
</dbReference>
<dbReference type="CDD" id="cd16335">
    <property type="entry name" value="MukF_N"/>
    <property type="match status" value="1"/>
</dbReference>
<dbReference type="Gene3D" id="1.20.58.590">
    <property type="entry name" value="Chromosome partition protein MukF, middle domain"/>
    <property type="match status" value="1"/>
</dbReference>
<dbReference type="Gene3D" id="1.10.225.40">
    <property type="entry name" value="MukF, C-terminal domain"/>
    <property type="match status" value="1"/>
</dbReference>
<dbReference type="Gene3D" id="1.10.10.10">
    <property type="entry name" value="Winged helix-like DNA-binding domain superfamily/Winged helix DNA-binding domain"/>
    <property type="match status" value="1"/>
</dbReference>
<dbReference type="HAMAP" id="MF_01803">
    <property type="entry name" value="MukF"/>
    <property type="match status" value="1"/>
</dbReference>
<dbReference type="InterPro" id="IPR005582">
    <property type="entry name" value="Chromosome_partition_MukF"/>
</dbReference>
<dbReference type="InterPro" id="IPR033441">
    <property type="entry name" value="MukF_C"/>
</dbReference>
<dbReference type="InterPro" id="IPR038198">
    <property type="entry name" value="MukF_C_sf"/>
</dbReference>
<dbReference type="InterPro" id="IPR033440">
    <property type="entry name" value="MukF_M"/>
</dbReference>
<dbReference type="InterPro" id="IPR036141">
    <property type="entry name" value="MukF_M_sp"/>
</dbReference>
<dbReference type="InterPro" id="IPR033439">
    <property type="entry name" value="MukF_WHTH"/>
</dbReference>
<dbReference type="InterPro" id="IPR036388">
    <property type="entry name" value="WH-like_DNA-bd_sf"/>
</dbReference>
<dbReference type="InterPro" id="IPR036390">
    <property type="entry name" value="WH_DNA-bd_sf"/>
</dbReference>
<dbReference type="NCBIfam" id="NF003615">
    <property type="entry name" value="PRK05260.1"/>
    <property type="match status" value="1"/>
</dbReference>
<dbReference type="Pfam" id="PF03882">
    <property type="entry name" value="KicB"/>
    <property type="match status" value="1"/>
</dbReference>
<dbReference type="Pfam" id="PF17193">
    <property type="entry name" value="MukF_C"/>
    <property type="match status" value="1"/>
</dbReference>
<dbReference type="Pfam" id="PF17192">
    <property type="entry name" value="MukF_M"/>
    <property type="match status" value="1"/>
</dbReference>
<dbReference type="PIRSF" id="PIRSF018282">
    <property type="entry name" value="MukF"/>
    <property type="match status" value="1"/>
</dbReference>
<dbReference type="SUPFAM" id="SSF140570">
    <property type="entry name" value="MukF C-terminal domain-like"/>
    <property type="match status" value="1"/>
</dbReference>
<dbReference type="SUPFAM" id="SSF46785">
    <property type="entry name" value="Winged helix' DNA-binding domain"/>
    <property type="match status" value="1"/>
</dbReference>
<proteinExistence type="inferred from homology"/>
<comment type="function">
    <text evidence="1">Involved in chromosome condensation, segregation and cell cycle progression. May participate in facilitating chromosome segregation by condensation DNA from both sides of a centrally located replisome during cell division. Not required for mini-F plasmid partitioning. Probably acts via its interaction with MukB and MukE. Overexpression results in anucleate cells. It has a calcium binding activity.</text>
</comment>
<comment type="subunit">
    <text evidence="1">Interacts, and probably forms a ternary complex, with MukE and MukB via its C-terminal region. The complex formation is stimulated by calcium or magnesium. It is required for an interaction between MukE and MukB.</text>
</comment>
<comment type="subcellular location">
    <subcellularLocation>
        <location evidence="1">Cytoplasm</location>
        <location evidence="1">Nucleoid</location>
    </subcellularLocation>
    <text evidence="1">Restricted to the nucleoid region.</text>
</comment>
<comment type="similarity">
    <text evidence="1">Belongs to the MukF family.</text>
</comment>
<feature type="chain" id="PRO_1000088225" description="Chromosome partition protein MukF">
    <location>
        <begin position="1"/>
        <end position="440"/>
    </location>
</feature>
<feature type="region of interest" description="Leucine-zipper">
    <location>
        <begin position="208"/>
        <end position="236"/>
    </location>
</feature>
<protein>
    <recommendedName>
        <fullName evidence="1">Chromosome partition protein MukF</fullName>
    </recommendedName>
</protein>
<reference key="1">
    <citation type="submission" date="2007-11" db="EMBL/GenBank/DDBJ databases">
        <authorList>
            <consortium name="The Salmonella enterica serovar Arizonae Genome Sequencing Project"/>
            <person name="McClelland M."/>
            <person name="Sanderson E.K."/>
            <person name="Porwollik S."/>
            <person name="Spieth J."/>
            <person name="Clifton W.S."/>
            <person name="Fulton R."/>
            <person name="Chunyan W."/>
            <person name="Wollam A."/>
            <person name="Shah N."/>
            <person name="Pepin K."/>
            <person name="Bhonagiri V."/>
            <person name="Nash W."/>
            <person name="Johnson M."/>
            <person name="Thiruvilangam P."/>
            <person name="Wilson R."/>
        </authorList>
    </citation>
    <scope>NUCLEOTIDE SEQUENCE [LARGE SCALE GENOMIC DNA]</scope>
    <source>
        <strain>ATCC BAA-731 / CDC346-86 / RSK2980</strain>
    </source>
</reference>